<feature type="chain" id="PRO_0000275712" description="Cytochrome b559 subunit alpha">
    <location>
        <begin position="1"/>
        <end position="83"/>
    </location>
</feature>
<feature type="transmembrane region" description="Helical" evidence="1">
    <location>
        <begin position="21"/>
        <end position="35"/>
    </location>
</feature>
<feature type="binding site" description="axial binding residue" evidence="1">
    <location>
        <position position="23"/>
    </location>
    <ligand>
        <name>heme</name>
        <dbReference type="ChEBI" id="CHEBI:30413"/>
        <note>ligand shared with beta subunit</note>
    </ligand>
    <ligandPart>
        <name>Fe</name>
        <dbReference type="ChEBI" id="CHEBI:18248"/>
    </ligandPart>
</feature>
<protein>
    <recommendedName>
        <fullName evidence="1">Cytochrome b559 subunit alpha</fullName>
    </recommendedName>
    <alternativeName>
        <fullName evidence="1">PSII reaction center subunit V</fullName>
    </alternativeName>
</protein>
<name>PSBE_OLTVI</name>
<gene>
    <name evidence="1" type="primary">psbE</name>
</gene>
<keyword id="KW-0150">Chloroplast</keyword>
<keyword id="KW-0249">Electron transport</keyword>
<keyword id="KW-0349">Heme</keyword>
<keyword id="KW-0408">Iron</keyword>
<keyword id="KW-0472">Membrane</keyword>
<keyword id="KW-0479">Metal-binding</keyword>
<keyword id="KW-0602">Photosynthesis</keyword>
<keyword id="KW-0604">Photosystem II</keyword>
<keyword id="KW-0934">Plastid</keyword>
<keyword id="KW-0793">Thylakoid</keyword>
<keyword id="KW-0812">Transmembrane</keyword>
<keyword id="KW-1133">Transmembrane helix</keyword>
<keyword id="KW-0813">Transport</keyword>
<proteinExistence type="inferred from homology"/>
<sequence length="83" mass="9433">MSGTTGERPFSDILTSIRYWVIHSITVPSLFIAGWLFVSTGLAYDVFGSPRPNEYFTEDRQETPLITDRFEALSQVKSQSEIK</sequence>
<dbReference type="EMBL" id="DQ291132">
    <property type="protein sequence ID" value="ABB81951.1"/>
    <property type="molecule type" value="Genomic_DNA"/>
</dbReference>
<dbReference type="RefSeq" id="YP_635883.1">
    <property type="nucleotide sequence ID" value="NC_008099.1"/>
</dbReference>
<dbReference type="SMR" id="Q20EW2"/>
<dbReference type="GeneID" id="4100130"/>
<dbReference type="GO" id="GO:0009535">
    <property type="term" value="C:chloroplast thylakoid membrane"/>
    <property type="evidence" value="ECO:0007669"/>
    <property type="project" value="UniProtKB-SubCell"/>
</dbReference>
<dbReference type="GO" id="GO:0009539">
    <property type="term" value="C:photosystem II reaction center"/>
    <property type="evidence" value="ECO:0007669"/>
    <property type="project" value="InterPro"/>
</dbReference>
<dbReference type="GO" id="GO:0009055">
    <property type="term" value="F:electron transfer activity"/>
    <property type="evidence" value="ECO:0007669"/>
    <property type="project" value="UniProtKB-UniRule"/>
</dbReference>
<dbReference type="GO" id="GO:0020037">
    <property type="term" value="F:heme binding"/>
    <property type="evidence" value="ECO:0007669"/>
    <property type="project" value="InterPro"/>
</dbReference>
<dbReference type="GO" id="GO:0005506">
    <property type="term" value="F:iron ion binding"/>
    <property type="evidence" value="ECO:0007669"/>
    <property type="project" value="UniProtKB-UniRule"/>
</dbReference>
<dbReference type="GO" id="GO:0009767">
    <property type="term" value="P:photosynthetic electron transport chain"/>
    <property type="evidence" value="ECO:0007669"/>
    <property type="project" value="InterPro"/>
</dbReference>
<dbReference type="Gene3D" id="1.20.5.860">
    <property type="entry name" value="Photosystem II cytochrome b559, alpha subunit"/>
    <property type="match status" value="1"/>
</dbReference>
<dbReference type="HAMAP" id="MF_00642">
    <property type="entry name" value="PSII_PsbE"/>
    <property type="match status" value="1"/>
</dbReference>
<dbReference type="InterPro" id="IPR006217">
    <property type="entry name" value="PSII_cyt_b559_asu"/>
</dbReference>
<dbReference type="InterPro" id="IPR037025">
    <property type="entry name" value="PSII_cyt_b559_asu_sf"/>
</dbReference>
<dbReference type="InterPro" id="IPR006216">
    <property type="entry name" value="PSII_cyt_b559_CS"/>
</dbReference>
<dbReference type="InterPro" id="IPR013081">
    <property type="entry name" value="PSII_cyt_b559_N"/>
</dbReference>
<dbReference type="InterPro" id="IPR013082">
    <property type="entry name" value="PSII_cytb559_asu_lum"/>
</dbReference>
<dbReference type="NCBIfam" id="TIGR01332">
    <property type="entry name" value="cyt_b559_alpha"/>
    <property type="match status" value="1"/>
</dbReference>
<dbReference type="PANTHER" id="PTHR33391">
    <property type="entry name" value="CYTOCHROME B559 SUBUNIT BETA-RELATED"/>
    <property type="match status" value="1"/>
</dbReference>
<dbReference type="PANTHER" id="PTHR33391:SF9">
    <property type="entry name" value="CYTOCHROME B559 SUBUNIT BETA-RELATED"/>
    <property type="match status" value="1"/>
</dbReference>
<dbReference type="Pfam" id="PF00283">
    <property type="entry name" value="Cytochrom_B559"/>
    <property type="match status" value="1"/>
</dbReference>
<dbReference type="Pfam" id="PF00284">
    <property type="entry name" value="Cytochrom_B559a"/>
    <property type="match status" value="1"/>
</dbReference>
<dbReference type="PIRSF" id="PIRSF000036">
    <property type="entry name" value="PsbE"/>
    <property type="match status" value="1"/>
</dbReference>
<dbReference type="SUPFAM" id="SSF161045">
    <property type="entry name" value="Cytochrome b559 subunits"/>
    <property type="match status" value="1"/>
</dbReference>
<dbReference type="PROSITE" id="PS00537">
    <property type="entry name" value="CYTOCHROME_B559"/>
    <property type="match status" value="1"/>
</dbReference>
<comment type="function">
    <text evidence="1">This b-type cytochrome is tightly associated with the reaction center of photosystem II (PSII). PSII is a light-driven water:plastoquinone oxidoreductase that uses light energy to abstract electrons from H(2)O, generating O(2) and a proton gradient subsequently used for ATP formation. It consists of a core antenna complex that captures photons, and an electron transfer chain that converts photonic excitation into a charge separation.</text>
</comment>
<comment type="cofactor">
    <cofactor evidence="1">
        <name>heme b</name>
        <dbReference type="ChEBI" id="CHEBI:60344"/>
    </cofactor>
    <text evidence="1">With its partner (PsbF) binds heme. PSII binds additional chlorophylls, carotenoids and specific lipids.</text>
</comment>
<comment type="subunit">
    <text evidence="1">Heterodimer of an alpha subunit and a beta subunit. PSII is composed of 1 copy each of membrane proteins PsbA, PsbB, PsbC, PsbD, PsbE, PsbF, PsbH, PsbI, PsbJ, PsbK, PsbL, PsbM, PsbT, PsbX, PsbY, PsbZ, Psb30/Ycf12, at least 3 peripheral proteins of the oxygen-evolving complex and a large number of cofactors. It forms dimeric complexes.</text>
</comment>
<comment type="subcellular location">
    <subcellularLocation>
        <location evidence="1">Plastid</location>
        <location evidence="1">Chloroplast thylakoid membrane</location>
        <topology evidence="1">Single-pass membrane protein</topology>
    </subcellularLocation>
</comment>
<comment type="similarity">
    <text evidence="1">Belongs to the PsbE/PsbF family.</text>
</comment>
<accession>Q20EW2</accession>
<geneLocation type="chloroplast"/>
<organism>
    <name type="scientific">Oltmannsiellopsis viridis</name>
    <name type="common">Marine flagellate</name>
    <name type="synonym">Oltmannsiella viridis</name>
    <dbReference type="NCBI Taxonomy" id="51324"/>
    <lineage>
        <taxon>Eukaryota</taxon>
        <taxon>Viridiplantae</taxon>
        <taxon>Chlorophyta</taxon>
        <taxon>Ulvophyceae</taxon>
        <taxon>Oltmannsiellopsidales</taxon>
        <taxon>Oltmannsiellopsidaceae</taxon>
        <taxon>Oltmannsiellopsis</taxon>
    </lineage>
</organism>
<reference key="1">
    <citation type="journal article" date="2006" name="BMC Biol.">
        <title>The complete chloroplast DNA sequence of the green alga Oltmannsiellopsis viridis reveals a distinctive quadripartite architecture in the chloroplast genome of early diverging ulvophytes.</title>
        <authorList>
            <person name="Pombert J.-F."/>
            <person name="Lemieux C."/>
            <person name="Turmel M."/>
        </authorList>
    </citation>
    <scope>NUCLEOTIDE SEQUENCE [LARGE SCALE GENOMIC DNA]</scope>
</reference>
<evidence type="ECO:0000255" key="1">
    <source>
        <dbReference type="HAMAP-Rule" id="MF_00642"/>
    </source>
</evidence>